<dbReference type="EMBL" id="AE003852">
    <property type="protein sequence ID" value="AAF95040.1"/>
    <property type="molecule type" value="Genomic_DNA"/>
</dbReference>
<dbReference type="PIR" id="B82143">
    <property type="entry name" value="B82143"/>
</dbReference>
<dbReference type="RefSeq" id="NP_231526.1">
    <property type="nucleotide sequence ID" value="NC_002505.1"/>
</dbReference>
<dbReference type="SMR" id="Q9KQV6"/>
<dbReference type="STRING" id="243277.VC_1892"/>
<dbReference type="ESTHER" id="vibch-y1892">
    <property type="family name" value="abh_upf00227"/>
</dbReference>
<dbReference type="DNASU" id="2613521"/>
<dbReference type="EnsemblBacteria" id="AAF95040">
    <property type="protein sequence ID" value="AAF95040"/>
    <property type="gene ID" value="VC_1892"/>
</dbReference>
<dbReference type="KEGG" id="vch:VC_1892"/>
<dbReference type="PATRIC" id="fig|243277.26.peg.1808"/>
<dbReference type="eggNOG" id="COG3150">
    <property type="taxonomic scope" value="Bacteria"/>
</dbReference>
<dbReference type="HOGENOM" id="CLU_128769_0_0_6"/>
<dbReference type="Proteomes" id="UP000000584">
    <property type="component" value="Chromosome 1"/>
</dbReference>
<dbReference type="GO" id="GO:0005829">
    <property type="term" value="C:cytosol"/>
    <property type="evidence" value="ECO:0000318"/>
    <property type="project" value="GO_Central"/>
</dbReference>
<dbReference type="GO" id="GO:0016788">
    <property type="term" value="F:hydrolase activity, acting on ester bonds"/>
    <property type="evidence" value="ECO:0000318"/>
    <property type="project" value="GO_Central"/>
</dbReference>
<dbReference type="Gene3D" id="3.40.50.1820">
    <property type="entry name" value="alpha/beta hydrolase"/>
    <property type="match status" value="1"/>
</dbReference>
<dbReference type="HAMAP" id="MF_01047">
    <property type="entry name" value="UPF0227"/>
    <property type="match status" value="1"/>
</dbReference>
<dbReference type="InterPro" id="IPR029058">
    <property type="entry name" value="AB_hydrolase_fold"/>
</dbReference>
<dbReference type="InterPro" id="IPR022987">
    <property type="entry name" value="UPF0227"/>
</dbReference>
<dbReference type="InterPro" id="IPR008886">
    <property type="entry name" value="UPF0227/Esterase_YqiA"/>
</dbReference>
<dbReference type="NCBIfam" id="NF003431">
    <property type="entry name" value="PRK04940.1"/>
    <property type="match status" value="1"/>
</dbReference>
<dbReference type="PANTHER" id="PTHR35602">
    <property type="entry name" value="ESTERASE YQIA-RELATED"/>
    <property type="match status" value="1"/>
</dbReference>
<dbReference type="PANTHER" id="PTHR35602:SF2">
    <property type="entry name" value="UPF0227 PROTEIN YCFP"/>
    <property type="match status" value="1"/>
</dbReference>
<dbReference type="Pfam" id="PF05728">
    <property type="entry name" value="UPF0227"/>
    <property type="match status" value="1"/>
</dbReference>
<dbReference type="SUPFAM" id="SSF53474">
    <property type="entry name" value="alpha/beta-Hydrolases"/>
    <property type="match status" value="1"/>
</dbReference>
<evidence type="ECO:0000255" key="1">
    <source>
        <dbReference type="HAMAP-Rule" id="MF_01047"/>
    </source>
</evidence>
<gene>
    <name type="ordered locus">VC_1892</name>
</gene>
<reference key="1">
    <citation type="journal article" date="2000" name="Nature">
        <title>DNA sequence of both chromosomes of the cholera pathogen Vibrio cholerae.</title>
        <authorList>
            <person name="Heidelberg J.F."/>
            <person name="Eisen J.A."/>
            <person name="Nelson W.C."/>
            <person name="Clayton R.A."/>
            <person name="Gwinn M.L."/>
            <person name="Dodson R.J."/>
            <person name="Haft D.H."/>
            <person name="Hickey E.K."/>
            <person name="Peterson J.D."/>
            <person name="Umayam L.A."/>
            <person name="Gill S.R."/>
            <person name="Nelson K.E."/>
            <person name="Read T.D."/>
            <person name="Tettelin H."/>
            <person name="Richardson D.L."/>
            <person name="Ermolaeva M.D."/>
            <person name="Vamathevan J.J."/>
            <person name="Bass S."/>
            <person name="Qin H."/>
            <person name="Dragoi I."/>
            <person name="Sellers P."/>
            <person name="McDonald L.A."/>
            <person name="Utterback T.R."/>
            <person name="Fleischmann R.D."/>
            <person name="Nierman W.C."/>
            <person name="White O."/>
            <person name="Salzberg S.L."/>
            <person name="Smith H.O."/>
            <person name="Colwell R.R."/>
            <person name="Mekalanos J.J."/>
            <person name="Venter J.C."/>
            <person name="Fraser C.M."/>
        </authorList>
    </citation>
    <scope>NUCLEOTIDE SEQUENCE [LARGE SCALE GENOMIC DNA]</scope>
    <source>
        <strain>ATCC 39315 / El Tor Inaba N16961</strain>
    </source>
</reference>
<keyword id="KW-1185">Reference proteome</keyword>
<proteinExistence type="inferred from homology"/>
<sequence>MIIYLHGFDSNSPGNHEKVLQLQFIDSDVRFINYSTLHPKHDMQHLLKEVHKAIEQSGDPNPLICGVGLGGYWSERIGFLCGIKQVIFNPNLHPELTMQGRIDRPEEYEDISTKCVEKFRAKNQGRCLVILSRQDEIHDNQKTAQELQDYYDIVWDDTQTHKFKKISHHLQAMKAFKAA</sequence>
<comment type="similarity">
    <text evidence="1">Belongs to the UPF0227 family.</text>
</comment>
<organism>
    <name type="scientific">Vibrio cholerae serotype O1 (strain ATCC 39315 / El Tor Inaba N16961)</name>
    <dbReference type="NCBI Taxonomy" id="243277"/>
    <lineage>
        <taxon>Bacteria</taxon>
        <taxon>Pseudomonadati</taxon>
        <taxon>Pseudomonadota</taxon>
        <taxon>Gammaproteobacteria</taxon>
        <taxon>Vibrionales</taxon>
        <taxon>Vibrionaceae</taxon>
        <taxon>Vibrio</taxon>
    </lineage>
</organism>
<protein>
    <recommendedName>
        <fullName evidence="1">UPF0227 protein VC_1892</fullName>
    </recommendedName>
</protein>
<accession>Q9KQV6</accession>
<feature type="chain" id="PRO_0000070325" description="UPF0227 protein VC_1892">
    <location>
        <begin position="1"/>
        <end position="179"/>
    </location>
</feature>
<name>Y1892_VIBCH</name>